<feature type="signal peptide" evidence="3">
    <location>
        <begin position="1"/>
        <end position="23"/>
    </location>
</feature>
<feature type="chain" id="PRO_5002780320" description="Dipeptidyl-peptidase 7">
    <location>
        <begin position="24"/>
        <end position="712"/>
    </location>
</feature>
<feature type="coiled-coil region" evidence="2">
    <location>
        <begin position="136"/>
        <end position="173"/>
    </location>
</feature>
<feature type="active site" description="Charge relay system" evidence="1">
    <location>
        <position position="89"/>
    </location>
</feature>
<feature type="active site" description="Charge relay system" evidence="1">
    <location>
        <position position="225"/>
    </location>
</feature>
<feature type="active site" description="Charge relay system" evidence="1">
    <location>
        <position position="648"/>
    </location>
</feature>
<feature type="site" description="Critical for substrate specificity of DPP7" evidence="4">
    <location>
        <position position="666"/>
    </location>
</feature>
<feature type="mutagenesis site" description="61% of wild-type catalytic activity toward Met-Leu-MCA." evidence="4">
    <original>G</original>
    <variation>A</variation>
    <location>
        <position position="666"/>
    </location>
</feature>
<feature type="mutagenesis site" description="Nearly abolishes catalytic activity toward Met-Leu-MCA." evidence="4">
    <original>G</original>
    <variation>D</variation>
    <location>
        <position position="666"/>
    </location>
</feature>
<feature type="mutagenesis site" description="22% of wild-type catalytic activity toward Met-Leu-MCA. Acquires activity toward Leu-Asp- and Leu-Glu-MCA." evidence="4">
    <original>G</original>
    <variation>R</variation>
    <location>
        <position position="666"/>
    </location>
</feature>
<evidence type="ECO:0000250" key="1">
    <source>
        <dbReference type="UniProtKB" id="V5YM14"/>
    </source>
</evidence>
<evidence type="ECO:0000255" key="2"/>
<evidence type="ECO:0000269" key="3">
    <source>
    </source>
</evidence>
<evidence type="ECO:0000269" key="4">
    <source>
    </source>
</evidence>
<evidence type="ECO:0000303" key="5">
    <source>
    </source>
</evidence>
<evidence type="ECO:0000305" key="6"/>
<evidence type="ECO:0000312" key="7">
    <source>
        <dbReference type="EMBL" id="BAG33998.1"/>
    </source>
</evidence>
<gene>
    <name evidence="7" type="primary">dpp7</name>
    <name evidence="5" type="synonym">dpp-7</name>
    <name evidence="7" type="ordered locus">PGN_1479</name>
</gene>
<sequence>MQMKLKSILLGAALLLGASGVAKADKGMWLLNELNQENLDRMRELGFTLPLDSLYSFDKPSIANAVVIFGGGCTGITVSDQGLIFTNHHCGYGAIQSQSTVDHDYLRDGFVSRTMGEELPIPGLSVKYLRKIVKVTDKVEGQLKGITDEMERLRKAQEVCQELAKKENADENQLCIVEPFYSNNEYFLIVYDVFKDVRMVFAPPSSVGKFGGDTDNWMWPRHTGDFSVFRVYAGADNRPAEYSKDNKPYKPVYFAAVSMQGYKADDYAMTIGFPGSTDRYLTSWGVEDRIENENNPRIEVRGIKQGIWKEAMSADQATRIKYASKYAQSANYWKNSIGMNRGLARLDVIGRKRAEERAFADWIRKNGKSAVYGDVLSSLEKAYKEGAKANREMTYLSETLFGGTEVVRFAQFANALATNPDAHAGILKSLDDKYKDYLPSLDRKVLPAMLDIVRRRIPADKLPDIFKNVIDKKFKGDTKKYADFVFDKSVVPYSDKFHAMLKSMDKEKFAKAIEKDPAVELSKSVIAAARAIQADAMANAYAIEKGKRLFFAGLREMYPGRALPSDANFTMRMSYGSIKGYEPQDGAWYNYHTTGKGVLEKQDPKSDEFAVQENILDLFRTKNYGRYAENGQLHIAFLSNNDITGGNSGSPVFDKNGRLIGLAFDGNWEAMSGDIEFEPDLQRTISVDIRYVLFMIDKWGQCPRLIQELKLI</sequence>
<accession>B2RKV3</accession>
<reference key="1">
    <citation type="journal article" date="2008" name="DNA Res.">
        <title>Determination of the genome sequence of Porphyromonas gingivalis strain ATCC 33277 and genomic comparison with strain W83 revealed extensive genome rearrangements in P. gingivalis.</title>
        <authorList>
            <person name="Naito M."/>
            <person name="Hirakawa H."/>
            <person name="Yamashita A."/>
            <person name="Ohara N."/>
            <person name="Shoji M."/>
            <person name="Yukitake H."/>
            <person name="Nakayama K."/>
            <person name="Toh H."/>
            <person name="Yoshimura F."/>
            <person name="Kuhara S."/>
            <person name="Hattori M."/>
            <person name="Hayashi T."/>
            <person name="Nakayama K."/>
        </authorList>
    </citation>
    <scope>NUCLEOTIDE SEQUENCE [LARGE SCALE GENOMIC DNA]</scope>
    <source>
        <strain>ATCC 33277 / DSM 20709 / CIP 103683 / JCM 12257 / NCTC 11834 / 2561</strain>
    </source>
</reference>
<reference key="2">
    <citation type="journal article" date="2001" name="J. Biol. Chem.">
        <title>Porphyromonas gingivalis DPP-7 represents a novel type of dipeptidylpeptidase.</title>
        <authorList>
            <person name="Banbula A."/>
            <person name="Yen J."/>
            <person name="Oleksy A."/>
            <person name="Mak P."/>
            <person name="Bugno M."/>
            <person name="Travis J."/>
            <person name="Potempa J."/>
        </authorList>
    </citation>
    <scope>PROTEIN SEQUENCE OF 24-48; 245-250; 392-396; 409-414; 445-450; 489-493 AND 549-554</scope>
    <scope>FUNCTION</scope>
    <scope>CATALYTIC ACTIVITY</scope>
    <scope>SUBSTRATE SPECIFICITY</scope>
    <scope>BIOPHYSICOCHEMICAL PROPERTIES</scope>
    <scope>ACTIVITY REGULATION</scope>
    <scope>SUBCELLULAR LOCATION</scope>
    <source>
        <strain>HG66</strain>
    </source>
</reference>
<reference key="3">
    <citation type="journal article" date="2013" name="Biochimie">
        <title>Discrimination based on Gly and Arg/Ser at position 673 between dipeptidyl-peptidase (DPP) 7 and DPP11, widely distributed DPPs in pathogenic and environmental gram-negative bacteria.</title>
        <authorList>
            <person name="Rouf S.M."/>
            <person name="Ohara-Nemoto Y."/>
            <person name="Hoshino T."/>
            <person name="Fujiwara T."/>
            <person name="Ono T."/>
            <person name="Nemoto T.K."/>
        </authorList>
    </citation>
    <scope>FUNCTION</scope>
    <scope>CATALYTIC ACTIVITY</scope>
    <scope>SUBSTRATE SPECIFICITY</scope>
    <scope>MUTAGENESIS OF GLY-666</scope>
    <source>
        <strain>ATCC 33277 / DSM 20709 / CIP 103683 / JCM 12257 / NCTC 11834 / 2561</strain>
    </source>
</reference>
<keyword id="KW-0031">Aminopeptidase</keyword>
<keyword id="KW-0998">Cell outer membrane</keyword>
<keyword id="KW-0175">Coiled coil</keyword>
<keyword id="KW-0903">Direct protein sequencing</keyword>
<keyword id="KW-0378">Hydrolase</keyword>
<keyword id="KW-0472">Membrane</keyword>
<keyword id="KW-0645">Protease</keyword>
<keyword id="KW-0720">Serine protease</keyword>
<keyword id="KW-0732">Signal</keyword>
<comment type="function">
    <text evidence="3 4">Catalyzes the removal of dipeptides from the N-terminus of oligopeptides (PubMed:11096098, PubMed:23246913). Shows a broad specificity for both aliphatic and aromatic residues in the P1 position, with glycine or proline being not acceptable in this position (PubMed:11096098). Most potently cleaves the synthetic substrate Met-Leu-methylcoumaryl-7-amide (Met-Leu-MCA), Leu-Arg-MCA and Lys-Ala-MCA to a lesser extent (PubMed:23246913). Is likely involved in amino acid metabolism and bacterial growth of asaccharolytic P.gingivalis, that utilizes amino acids from extracellular proteinaceous nutrients as energy and carbon sources (PubMed:11096098).</text>
</comment>
<comment type="activity regulation">
    <text evidence="3">Is inhibited in vitro by typical serine protease inhibitors like diisopropyl fluorophosphate, Pefablock, and 3,4-dichloroisocoumarin, but not by typical cysteine class inhibitors such as E-64 or iododoacetic acid.</text>
</comment>
<comment type="biophysicochemical properties">
    <kinetics>
        <KM evidence="3">313 uM for Ala-Ala-pNA</KM>
        <KM evidence="3">441 uM for Ala-Phe-pNA</KM>
        <KM evidence="3">256 uM for Gly-Ala-pNA</KM>
    </kinetics>
    <phDependence>
        <text evidence="3">Is active against Ala-Phe-pNA over a broad pH range, from neutral to basic pH (6.5-9.0).</text>
    </phDependence>
    <temperatureDependence>
        <text evidence="3">Optimum temperature is 43 degrees Celsius, using Ala-Phe-pNA as substrate.</text>
    </temperatureDependence>
</comment>
<comment type="subcellular location">
    <subcellularLocation>
        <location evidence="3">Cell outer membrane</location>
    </subcellularLocation>
</comment>
<comment type="similarity">
    <text evidence="6">Belongs to the peptidase S46 family.</text>
</comment>
<proteinExistence type="evidence at protein level"/>
<name>DPP7_PORG3</name>
<dbReference type="EC" id="3.4.14.-" evidence="3"/>
<dbReference type="EMBL" id="AP009380">
    <property type="protein sequence ID" value="BAG33998.1"/>
    <property type="molecule type" value="Genomic_DNA"/>
</dbReference>
<dbReference type="SMR" id="B2RKV3"/>
<dbReference type="MEROPS" id="S46.001"/>
<dbReference type="KEGG" id="pgn:PGN_1479"/>
<dbReference type="eggNOG" id="COG3591">
    <property type="taxonomic scope" value="Bacteria"/>
</dbReference>
<dbReference type="HOGENOM" id="CLU_013776_0_0_10"/>
<dbReference type="Proteomes" id="UP000008842">
    <property type="component" value="Chromosome"/>
</dbReference>
<dbReference type="GO" id="GO:0009279">
    <property type="term" value="C:cell outer membrane"/>
    <property type="evidence" value="ECO:0000314"/>
    <property type="project" value="UniProtKB"/>
</dbReference>
<dbReference type="GO" id="GO:0008239">
    <property type="term" value="F:dipeptidyl-peptidase activity"/>
    <property type="evidence" value="ECO:0000314"/>
    <property type="project" value="UniProtKB"/>
</dbReference>
<dbReference type="GO" id="GO:0042277">
    <property type="term" value="F:peptide binding"/>
    <property type="evidence" value="ECO:0000314"/>
    <property type="project" value="UniProtKB"/>
</dbReference>
<dbReference type="GO" id="GO:0070009">
    <property type="term" value="F:serine-type aminopeptidase activity"/>
    <property type="evidence" value="ECO:0007669"/>
    <property type="project" value="InterPro"/>
</dbReference>
<dbReference type="GO" id="GO:0008236">
    <property type="term" value="F:serine-type peptidase activity"/>
    <property type="evidence" value="ECO:0000314"/>
    <property type="project" value="UniProtKB"/>
</dbReference>
<dbReference type="GO" id="GO:0043171">
    <property type="term" value="P:peptide catabolic process"/>
    <property type="evidence" value="ECO:0000314"/>
    <property type="project" value="UniProtKB"/>
</dbReference>
<dbReference type="GO" id="GO:0006508">
    <property type="term" value="P:proteolysis"/>
    <property type="evidence" value="ECO:0007669"/>
    <property type="project" value="UniProtKB-KW"/>
</dbReference>
<dbReference type="FunFam" id="2.40.10.10:FF:000128">
    <property type="entry name" value="S46 family peptidase"/>
    <property type="match status" value="1"/>
</dbReference>
<dbReference type="Gene3D" id="2.40.10.10">
    <property type="entry name" value="Trypsin-like serine proteases"/>
    <property type="match status" value="1"/>
</dbReference>
<dbReference type="InterPro" id="IPR019500">
    <property type="entry name" value="Pep_S46"/>
</dbReference>
<dbReference type="InterPro" id="IPR009003">
    <property type="entry name" value="Peptidase_S1_PA"/>
</dbReference>
<dbReference type="InterPro" id="IPR043504">
    <property type="entry name" value="Peptidase_S1_PA_chymotrypsin"/>
</dbReference>
<dbReference type="PANTHER" id="PTHR38469">
    <property type="entry name" value="PERIPLASMIC PEPTIDASE SUBFAMILY S1B"/>
    <property type="match status" value="1"/>
</dbReference>
<dbReference type="PANTHER" id="PTHR38469:SF1">
    <property type="entry name" value="PERIPLASMIC PEPTIDASE SUBFAMILY S1B"/>
    <property type="match status" value="1"/>
</dbReference>
<dbReference type="Pfam" id="PF10459">
    <property type="entry name" value="Peptidase_S46"/>
    <property type="match status" value="1"/>
</dbReference>
<dbReference type="SUPFAM" id="SSF50494">
    <property type="entry name" value="Trypsin-like serine proteases"/>
    <property type="match status" value="1"/>
</dbReference>
<organism>
    <name type="scientific">Porphyromonas gingivalis (strain ATCC 33277 / DSM 20709 / CIP 103683 / JCM 12257 / NCTC 11834 / 2561)</name>
    <dbReference type="NCBI Taxonomy" id="431947"/>
    <lineage>
        <taxon>Bacteria</taxon>
        <taxon>Pseudomonadati</taxon>
        <taxon>Bacteroidota</taxon>
        <taxon>Bacteroidia</taxon>
        <taxon>Bacteroidales</taxon>
        <taxon>Porphyromonadaceae</taxon>
        <taxon>Porphyromonas</taxon>
    </lineage>
</organism>
<protein>
    <recommendedName>
        <fullName evidence="5">Dipeptidyl-peptidase 7</fullName>
        <shortName evidence="5">DPP-7</shortName>
        <shortName>DPP7</shortName>
        <ecNumber evidence="3">3.4.14.-</ecNumber>
    </recommendedName>
</protein>